<feature type="chain" id="PRO_1000143214" description="Small ribosomal subunit protein uS17">
    <location>
        <begin position="1"/>
        <end position="84"/>
    </location>
</feature>
<name>RS17_ALISL</name>
<dbReference type="EMBL" id="FM178379">
    <property type="protein sequence ID" value="CAQ78014.1"/>
    <property type="molecule type" value="Genomic_DNA"/>
</dbReference>
<dbReference type="RefSeq" id="WP_012549158.1">
    <property type="nucleotide sequence ID" value="NC_011312.1"/>
</dbReference>
<dbReference type="SMR" id="B6EPT4"/>
<dbReference type="KEGG" id="vsa:VSAL_I0329"/>
<dbReference type="eggNOG" id="COG0186">
    <property type="taxonomic scope" value="Bacteria"/>
</dbReference>
<dbReference type="HOGENOM" id="CLU_073626_1_1_6"/>
<dbReference type="Proteomes" id="UP000001730">
    <property type="component" value="Chromosome 1"/>
</dbReference>
<dbReference type="GO" id="GO:0022627">
    <property type="term" value="C:cytosolic small ribosomal subunit"/>
    <property type="evidence" value="ECO:0007669"/>
    <property type="project" value="TreeGrafter"/>
</dbReference>
<dbReference type="GO" id="GO:0019843">
    <property type="term" value="F:rRNA binding"/>
    <property type="evidence" value="ECO:0007669"/>
    <property type="project" value="UniProtKB-UniRule"/>
</dbReference>
<dbReference type="GO" id="GO:0003735">
    <property type="term" value="F:structural constituent of ribosome"/>
    <property type="evidence" value="ECO:0007669"/>
    <property type="project" value="InterPro"/>
</dbReference>
<dbReference type="GO" id="GO:0006412">
    <property type="term" value="P:translation"/>
    <property type="evidence" value="ECO:0007669"/>
    <property type="project" value="UniProtKB-UniRule"/>
</dbReference>
<dbReference type="CDD" id="cd00364">
    <property type="entry name" value="Ribosomal_uS17"/>
    <property type="match status" value="1"/>
</dbReference>
<dbReference type="FunFam" id="2.40.50.140:FF:000014">
    <property type="entry name" value="30S ribosomal protein S17"/>
    <property type="match status" value="1"/>
</dbReference>
<dbReference type="Gene3D" id="2.40.50.140">
    <property type="entry name" value="Nucleic acid-binding proteins"/>
    <property type="match status" value="1"/>
</dbReference>
<dbReference type="HAMAP" id="MF_01345_B">
    <property type="entry name" value="Ribosomal_uS17_B"/>
    <property type="match status" value="1"/>
</dbReference>
<dbReference type="InterPro" id="IPR012340">
    <property type="entry name" value="NA-bd_OB-fold"/>
</dbReference>
<dbReference type="InterPro" id="IPR000266">
    <property type="entry name" value="Ribosomal_uS17"/>
</dbReference>
<dbReference type="InterPro" id="IPR019984">
    <property type="entry name" value="Ribosomal_uS17_bact/chlr"/>
</dbReference>
<dbReference type="InterPro" id="IPR019979">
    <property type="entry name" value="Ribosomal_uS17_CS"/>
</dbReference>
<dbReference type="NCBIfam" id="NF004123">
    <property type="entry name" value="PRK05610.1"/>
    <property type="match status" value="1"/>
</dbReference>
<dbReference type="NCBIfam" id="TIGR03635">
    <property type="entry name" value="uS17_bact"/>
    <property type="match status" value="1"/>
</dbReference>
<dbReference type="PANTHER" id="PTHR10744">
    <property type="entry name" value="40S RIBOSOMAL PROTEIN S11 FAMILY MEMBER"/>
    <property type="match status" value="1"/>
</dbReference>
<dbReference type="PANTHER" id="PTHR10744:SF1">
    <property type="entry name" value="SMALL RIBOSOMAL SUBUNIT PROTEIN US17M"/>
    <property type="match status" value="1"/>
</dbReference>
<dbReference type="Pfam" id="PF00366">
    <property type="entry name" value="Ribosomal_S17"/>
    <property type="match status" value="1"/>
</dbReference>
<dbReference type="PRINTS" id="PR00973">
    <property type="entry name" value="RIBOSOMALS17"/>
</dbReference>
<dbReference type="SUPFAM" id="SSF50249">
    <property type="entry name" value="Nucleic acid-binding proteins"/>
    <property type="match status" value="1"/>
</dbReference>
<dbReference type="PROSITE" id="PS00056">
    <property type="entry name" value="RIBOSOMAL_S17"/>
    <property type="match status" value="1"/>
</dbReference>
<reference key="1">
    <citation type="journal article" date="2008" name="BMC Genomics">
        <title>The genome sequence of the fish pathogen Aliivibrio salmonicida strain LFI1238 shows extensive evidence of gene decay.</title>
        <authorList>
            <person name="Hjerde E."/>
            <person name="Lorentzen M.S."/>
            <person name="Holden M.T."/>
            <person name="Seeger K."/>
            <person name="Paulsen S."/>
            <person name="Bason N."/>
            <person name="Churcher C."/>
            <person name="Harris D."/>
            <person name="Norbertczak H."/>
            <person name="Quail M.A."/>
            <person name="Sanders S."/>
            <person name="Thurston S."/>
            <person name="Parkhill J."/>
            <person name="Willassen N.P."/>
            <person name="Thomson N.R."/>
        </authorList>
    </citation>
    <scope>NUCLEOTIDE SEQUENCE [LARGE SCALE GENOMIC DNA]</scope>
    <source>
        <strain>LFI1238</strain>
    </source>
</reference>
<gene>
    <name evidence="1" type="primary">rpsQ</name>
    <name type="ordered locus">VSAL_I0329</name>
</gene>
<keyword id="KW-0687">Ribonucleoprotein</keyword>
<keyword id="KW-0689">Ribosomal protein</keyword>
<keyword id="KW-0694">RNA-binding</keyword>
<keyword id="KW-0699">rRNA-binding</keyword>
<comment type="function">
    <text evidence="1">One of the primary rRNA binding proteins, it binds specifically to the 5'-end of 16S ribosomal RNA.</text>
</comment>
<comment type="subunit">
    <text evidence="1">Part of the 30S ribosomal subunit.</text>
</comment>
<comment type="similarity">
    <text evidence="1">Belongs to the universal ribosomal protein uS17 family.</text>
</comment>
<proteinExistence type="inferred from homology"/>
<evidence type="ECO:0000255" key="1">
    <source>
        <dbReference type="HAMAP-Rule" id="MF_01345"/>
    </source>
</evidence>
<evidence type="ECO:0000305" key="2"/>
<accession>B6EPT4</accession>
<organism>
    <name type="scientific">Aliivibrio salmonicida (strain LFI1238)</name>
    <name type="common">Vibrio salmonicida (strain LFI1238)</name>
    <dbReference type="NCBI Taxonomy" id="316275"/>
    <lineage>
        <taxon>Bacteria</taxon>
        <taxon>Pseudomonadati</taxon>
        <taxon>Pseudomonadota</taxon>
        <taxon>Gammaproteobacteria</taxon>
        <taxon>Vibrionales</taxon>
        <taxon>Vibrionaceae</taxon>
        <taxon>Aliivibrio</taxon>
    </lineage>
</organism>
<protein>
    <recommendedName>
        <fullName evidence="1">Small ribosomal subunit protein uS17</fullName>
    </recommendedName>
    <alternativeName>
        <fullName evidence="2">30S ribosomal protein S17</fullName>
    </alternativeName>
</protein>
<sequence>MSEKIRTMQGRVISDKMDKSIVVAIERMVKHPIYGKYIKRTTKLHAHDENNECGQGDLVVIRECRPLSKTKSWTLVNIVEKAKA</sequence>